<organism>
    <name type="scientific">Ruthia magnifica subsp. Calyptogena magnifica</name>
    <dbReference type="NCBI Taxonomy" id="413404"/>
    <lineage>
        <taxon>Bacteria</taxon>
        <taxon>Pseudomonadati</taxon>
        <taxon>Pseudomonadota</taxon>
        <taxon>Gammaproteobacteria</taxon>
        <taxon>Candidatus Pseudothioglobaceae</taxon>
        <taxon>Candidatus Ruthturnera</taxon>
    </lineage>
</organism>
<feature type="chain" id="PRO_0000332672" description="Ribonuclease H">
    <location>
        <begin position="1"/>
        <end position="146"/>
    </location>
</feature>
<feature type="domain" description="RNase H type-1" evidence="2">
    <location>
        <begin position="1"/>
        <end position="142"/>
    </location>
</feature>
<feature type="binding site" evidence="1">
    <location>
        <position position="9"/>
    </location>
    <ligand>
        <name>Mg(2+)</name>
        <dbReference type="ChEBI" id="CHEBI:18420"/>
        <label>1</label>
    </ligand>
</feature>
<feature type="binding site" evidence="1">
    <location>
        <position position="9"/>
    </location>
    <ligand>
        <name>Mg(2+)</name>
        <dbReference type="ChEBI" id="CHEBI:18420"/>
        <label>2</label>
    </ligand>
</feature>
<feature type="binding site" evidence="1">
    <location>
        <position position="47"/>
    </location>
    <ligand>
        <name>Mg(2+)</name>
        <dbReference type="ChEBI" id="CHEBI:18420"/>
        <label>1</label>
    </ligand>
</feature>
<feature type="binding site" evidence="1">
    <location>
        <position position="70"/>
    </location>
    <ligand>
        <name>Mg(2+)</name>
        <dbReference type="ChEBI" id="CHEBI:18420"/>
        <label>1</label>
    </ligand>
</feature>
<feature type="binding site" evidence="1">
    <location>
        <position position="134"/>
    </location>
    <ligand>
        <name>Mg(2+)</name>
        <dbReference type="ChEBI" id="CHEBI:18420"/>
        <label>2</label>
    </ligand>
</feature>
<gene>
    <name evidence="1" type="primary">rnhA</name>
    <name type="ordered locus">Rmag_0374</name>
</gene>
<keyword id="KW-0963">Cytoplasm</keyword>
<keyword id="KW-0255">Endonuclease</keyword>
<keyword id="KW-0378">Hydrolase</keyword>
<keyword id="KW-0460">Magnesium</keyword>
<keyword id="KW-0479">Metal-binding</keyword>
<keyword id="KW-0540">Nuclease</keyword>
<evidence type="ECO:0000255" key="1">
    <source>
        <dbReference type="HAMAP-Rule" id="MF_00042"/>
    </source>
</evidence>
<evidence type="ECO:0000255" key="2">
    <source>
        <dbReference type="PROSITE-ProRule" id="PRU00408"/>
    </source>
</evidence>
<protein>
    <recommendedName>
        <fullName evidence="1">Ribonuclease H</fullName>
        <shortName evidence="1">RNase H</shortName>
        <ecNumber evidence="1">3.1.26.4</ecNumber>
    </recommendedName>
</protein>
<reference key="1">
    <citation type="journal article" date="2007" name="Science">
        <title>The Calyptogena magnifica chemoautotrophic symbiont genome.</title>
        <authorList>
            <person name="Newton I.L.G."/>
            <person name="Woyke T."/>
            <person name="Auchtung T.A."/>
            <person name="Dilly G.F."/>
            <person name="Dutton R.J."/>
            <person name="Fisher M.C."/>
            <person name="Fontanez K.M."/>
            <person name="Lau E."/>
            <person name="Stewart F.J."/>
            <person name="Richardson P.M."/>
            <person name="Barry K.W."/>
            <person name="Saunders E."/>
            <person name="Detter J.C."/>
            <person name="Wu D."/>
            <person name="Eisen J.A."/>
            <person name="Cavanaugh C.M."/>
        </authorList>
    </citation>
    <scope>NUCLEOTIDE SEQUENCE [LARGE SCALE GENOMIC DNA]</scope>
</reference>
<accession>A1AW38</accession>
<comment type="function">
    <text evidence="1">Endonuclease that specifically degrades the RNA of RNA-DNA hybrids.</text>
</comment>
<comment type="catalytic activity">
    <reaction evidence="1">
        <text>Endonucleolytic cleavage to 5'-phosphomonoester.</text>
        <dbReference type="EC" id="3.1.26.4"/>
    </reaction>
</comment>
<comment type="cofactor">
    <cofactor evidence="1">
        <name>Mg(2+)</name>
        <dbReference type="ChEBI" id="CHEBI:18420"/>
    </cofactor>
    <text evidence="1">Binds 1 Mg(2+) ion per subunit. May bind a second metal ion at a regulatory site, or after substrate binding.</text>
</comment>
<comment type="subunit">
    <text evidence="1">Monomer.</text>
</comment>
<comment type="subcellular location">
    <subcellularLocation>
        <location evidence="1">Cytoplasm</location>
    </subcellularLocation>
</comment>
<comment type="similarity">
    <text evidence="1">Belongs to the RNase H family.</text>
</comment>
<sequence>MNKIIIYTDGGCRGNPGIGGWGVWLKYGDYDKKLQGVQQDTTNNQMELTATIKALEVIKSNDIAIDLFTDSKYVITGISEWIKNWKAKGWKTANKKPVKNIDLWQRLDVLNNQHNVTWHWVKGHSGDKGNDMADALANLAMDKIST</sequence>
<proteinExistence type="inferred from homology"/>
<dbReference type="EC" id="3.1.26.4" evidence="1"/>
<dbReference type="EMBL" id="CP000488">
    <property type="protein sequence ID" value="ABL02145.1"/>
    <property type="molecule type" value="Genomic_DNA"/>
</dbReference>
<dbReference type="RefSeq" id="WP_011737770.1">
    <property type="nucleotide sequence ID" value="NC_008610.1"/>
</dbReference>
<dbReference type="SMR" id="A1AW38"/>
<dbReference type="STRING" id="413404.Rmag_0374"/>
<dbReference type="KEGG" id="rma:Rmag_0374"/>
<dbReference type="eggNOG" id="COG0328">
    <property type="taxonomic scope" value="Bacteria"/>
</dbReference>
<dbReference type="HOGENOM" id="CLU_030894_6_2_6"/>
<dbReference type="OrthoDB" id="7845843at2"/>
<dbReference type="Proteomes" id="UP000002587">
    <property type="component" value="Chromosome"/>
</dbReference>
<dbReference type="GO" id="GO:0005737">
    <property type="term" value="C:cytoplasm"/>
    <property type="evidence" value="ECO:0007669"/>
    <property type="project" value="UniProtKB-SubCell"/>
</dbReference>
<dbReference type="GO" id="GO:0000287">
    <property type="term" value="F:magnesium ion binding"/>
    <property type="evidence" value="ECO:0007669"/>
    <property type="project" value="UniProtKB-UniRule"/>
</dbReference>
<dbReference type="GO" id="GO:0003676">
    <property type="term" value="F:nucleic acid binding"/>
    <property type="evidence" value="ECO:0007669"/>
    <property type="project" value="InterPro"/>
</dbReference>
<dbReference type="GO" id="GO:0004523">
    <property type="term" value="F:RNA-DNA hybrid ribonuclease activity"/>
    <property type="evidence" value="ECO:0007669"/>
    <property type="project" value="UniProtKB-UniRule"/>
</dbReference>
<dbReference type="GO" id="GO:0043137">
    <property type="term" value="P:DNA replication, removal of RNA primer"/>
    <property type="evidence" value="ECO:0007669"/>
    <property type="project" value="TreeGrafter"/>
</dbReference>
<dbReference type="CDD" id="cd09278">
    <property type="entry name" value="RNase_HI_prokaryote_like"/>
    <property type="match status" value="1"/>
</dbReference>
<dbReference type="FunFam" id="3.30.420.10:FF:000089">
    <property type="entry name" value="Ribonuclease H"/>
    <property type="match status" value="1"/>
</dbReference>
<dbReference type="Gene3D" id="3.30.420.10">
    <property type="entry name" value="Ribonuclease H-like superfamily/Ribonuclease H"/>
    <property type="match status" value="1"/>
</dbReference>
<dbReference type="HAMAP" id="MF_00042">
    <property type="entry name" value="RNase_H"/>
    <property type="match status" value="1"/>
</dbReference>
<dbReference type="InterPro" id="IPR050092">
    <property type="entry name" value="RNase_H"/>
</dbReference>
<dbReference type="InterPro" id="IPR012337">
    <property type="entry name" value="RNaseH-like_sf"/>
</dbReference>
<dbReference type="InterPro" id="IPR002156">
    <property type="entry name" value="RNaseH_domain"/>
</dbReference>
<dbReference type="InterPro" id="IPR036397">
    <property type="entry name" value="RNaseH_sf"/>
</dbReference>
<dbReference type="InterPro" id="IPR022892">
    <property type="entry name" value="RNaseHI"/>
</dbReference>
<dbReference type="NCBIfam" id="NF001236">
    <property type="entry name" value="PRK00203.1"/>
    <property type="match status" value="1"/>
</dbReference>
<dbReference type="PANTHER" id="PTHR10642">
    <property type="entry name" value="RIBONUCLEASE H1"/>
    <property type="match status" value="1"/>
</dbReference>
<dbReference type="PANTHER" id="PTHR10642:SF26">
    <property type="entry name" value="RIBONUCLEASE H1"/>
    <property type="match status" value="1"/>
</dbReference>
<dbReference type="Pfam" id="PF00075">
    <property type="entry name" value="RNase_H"/>
    <property type="match status" value="1"/>
</dbReference>
<dbReference type="SUPFAM" id="SSF53098">
    <property type="entry name" value="Ribonuclease H-like"/>
    <property type="match status" value="1"/>
</dbReference>
<dbReference type="PROSITE" id="PS50879">
    <property type="entry name" value="RNASE_H_1"/>
    <property type="match status" value="1"/>
</dbReference>
<name>RNH_RUTMC</name>